<organism>
    <name type="scientific">Wolbachia pipientis wMel</name>
    <dbReference type="NCBI Taxonomy" id="163164"/>
    <lineage>
        <taxon>Bacteria</taxon>
        <taxon>Pseudomonadati</taxon>
        <taxon>Pseudomonadota</taxon>
        <taxon>Alphaproteobacteria</taxon>
        <taxon>Rickettsiales</taxon>
        <taxon>Anaplasmataceae</taxon>
        <taxon>Wolbachieae</taxon>
        <taxon>Wolbachia</taxon>
    </lineage>
</organism>
<protein>
    <recommendedName>
        <fullName evidence="1">3-hydroxyacyl-[acyl-carrier-protein] dehydratase FabZ</fullName>
        <ecNumber evidence="1">4.2.1.59</ecNumber>
    </recommendedName>
    <alternativeName>
        <fullName evidence="1">(3R)-hydroxymyristoyl-[acyl-carrier-protein] dehydratase</fullName>
        <shortName evidence="1">(3R)-hydroxymyristoyl-ACP dehydrase</shortName>
    </alternativeName>
    <alternativeName>
        <fullName evidence="1">Beta-hydroxyacyl-ACP dehydratase</fullName>
    </alternativeName>
</protein>
<gene>
    <name evidence="1" type="primary">fabZ</name>
    <name type="ordered locus">WD_1083</name>
</gene>
<keyword id="KW-0963">Cytoplasm</keyword>
<keyword id="KW-0441">Lipid A biosynthesis</keyword>
<keyword id="KW-0444">Lipid biosynthesis</keyword>
<keyword id="KW-0443">Lipid metabolism</keyword>
<keyword id="KW-0456">Lyase</keyword>
<reference key="1">
    <citation type="journal article" date="2004" name="PLoS Biol.">
        <title>Phylogenomics of the reproductive parasite Wolbachia pipientis wMel: a streamlined genome overrun by mobile genetic elements.</title>
        <authorList>
            <person name="Wu M."/>
            <person name="Sun L.V."/>
            <person name="Vamathevan J.J."/>
            <person name="Riegler M."/>
            <person name="DeBoy R.T."/>
            <person name="Brownlie J.C."/>
            <person name="McGraw E.A."/>
            <person name="Martin W."/>
            <person name="Esser C."/>
            <person name="Ahmadinejad N."/>
            <person name="Wiegand C."/>
            <person name="Madupu R."/>
            <person name="Beanan M.J."/>
            <person name="Brinkac L.M."/>
            <person name="Daugherty S.C."/>
            <person name="Durkin A.S."/>
            <person name="Kolonay J.F."/>
            <person name="Nelson W.C."/>
            <person name="Mohamoud Y."/>
            <person name="Lee P."/>
            <person name="Berry K.J."/>
            <person name="Young M.B."/>
            <person name="Utterback T.R."/>
            <person name="Weidman J.F."/>
            <person name="Nierman W.C."/>
            <person name="Paulsen I.T."/>
            <person name="Nelson K.E."/>
            <person name="Tettelin H."/>
            <person name="O'Neill S.L."/>
            <person name="Eisen J.A."/>
        </authorList>
    </citation>
    <scope>NUCLEOTIDE SEQUENCE [LARGE SCALE GENOMIC DNA]</scope>
</reference>
<name>FABZ_WOLPM</name>
<proteinExistence type="inferred from homology"/>
<accession>P61455</accession>
<evidence type="ECO:0000255" key="1">
    <source>
        <dbReference type="HAMAP-Rule" id="MF_00406"/>
    </source>
</evidence>
<dbReference type="EC" id="4.2.1.59" evidence="1"/>
<dbReference type="EMBL" id="AE017196">
    <property type="protein sequence ID" value="AAS14738.1"/>
    <property type="molecule type" value="Genomic_DNA"/>
</dbReference>
<dbReference type="RefSeq" id="WP_010082082.1">
    <property type="nucleotide sequence ID" value="NZ_OX384529.1"/>
</dbReference>
<dbReference type="SMR" id="P61455"/>
<dbReference type="EnsemblBacteria" id="AAS14738">
    <property type="protein sequence ID" value="AAS14738"/>
    <property type="gene ID" value="WD_1083"/>
</dbReference>
<dbReference type="GeneID" id="70036558"/>
<dbReference type="KEGG" id="wol:WD_1083"/>
<dbReference type="eggNOG" id="COG0764">
    <property type="taxonomic scope" value="Bacteria"/>
</dbReference>
<dbReference type="Proteomes" id="UP000008215">
    <property type="component" value="Chromosome"/>
</dbReference>
<dbReference type="GO" id="GO:0005737">
    <property type="term" value="C:cytoplasm"/>
    <property type="evidence" value="ECO:0007669"/>
    <property type="project" value="UniProtKB-SubCell"/>
</dbReference>
<dbReference type="GO" id="GO:0016020">
    <property type="term" value="C:membrane"/>
    <property type="evidence" value="ECO:0007669"/>
    <property type="project" value="GOC"/>
</dbReference>
<dbReference type="GO" id="GO:0019171">
    <property type="term" value="F:(3R)-hydroxyacyl-[acyl-carrier-protein] dehydratase activity"/>
    <property type="evidence" value="ECO:0007669"/>
    <property type="project" value="UniProtKB-EC"/>
</dbReference>
<dbReference type="GO" id="GO:0006633">
    <property type="term" value="P:fatty acid biosynthetic process"/>
    <property type="evidence" value="ECO:0007669"/>
    <property type="project" value="UniProtKB-UniRule"/>
</dbReference>
<dbReference type="GO" id="GO:0009245">
    <property type="term" value="P:lipid A biosynthetic process"/>
    <property type="evidence" value="ECO:0007669"/>
    <property type="project" value="UniProtKB-UniRule"/>
</dbReference>
<dbReference type="CDD" id="cd01288">
    <property type="entry name" value="FabZ"/>
    <property type="match status" value="1"/>
</dbReference>
<dbReference type="FunFam" id="3.10.129.10:FF:000001">
    <property type="entry name" value="3-hydroxyacyl-[acyl-carrier-protein] dehydratase FabZ"/>
    <property type="match status" value="1"/>
</dbReference>
<dbReference type="Gene3D" id="3.10.129.10">
    <property type="entry name" value="Hotdog Thioesterase"/>
    <property type="match status" value="1"/>
</dbReference>
<dbReference type="HAMAP" id="MF_00406">
    <property type="entry name" value="FabZ"/>
    <property type="match status" value="1"/>
</dbReference>
<dbReference type="InterPro" id="IPR013114">
    <property type="entry name" value="FabA_FabZ"/>
</dbReference>
<dbReference type="InterPro" id="IPR010084">
    <property type="entry name" value="FabZ"/>
</dbReference>
<dbReference type="InterPro" id="IPR029069">
    <property type="entry name" value="HotDog_dom_sf"/>
</dbReference>
<dbReference type="NCBIfam" id="TIGR01750">
    <property type="entry name" value="fabZ"/>
    <property type="match status" value="1"/>
</dbReference>
<dbReference type="NCBIfam" id="NF000582">
    <property type="entry name" value="PRK00006.1"/>
    <property type="match status" value="1"/>
</dbReference>
<dbReference type="PANTHER" id="PTHR30272">
    <property type="entry name" value="3-HYDROXYACYL-[ACYL-CARRIER-PROTEIN] DEHYDRATASE"/>
    <property type="match status" value="1"/>
</dbReference>
<dbReference type="PANTHER" id="PTHR30272:SF1">
    <property type="entry name" value="3-HYDROXYACYL-[ACYL-CARRIER-PROTEIN] DEHYDRATASE"/>
    <property type="match status" value="1"/>
</dbReference>
<dbReference type="Pfam" id="PF07977">
    <property type="entry name" value="FabA"/>
    <property type="match status" value="1"/>
</dbReference>
<dbReference type="SUPFAM" id="SSF54637">
    <property type="entry name" value="Thioesterase/thiol ester dehydrase-isomerase"/>
    <property type="match status" value="1"/>
</dbReference>
<feature type="chain" id="PRO_0000091761" description="3-hydroxyacyl-[acyl-carrier-protein] dehydratase FabZ">
    <location>
        <begin position="1"/>
        <end position="143"/>
    </location>
</feature>
<feature type="active site" evidence="1">
    <location>
        <position position="49"/>
    </location>
</feature>
<sequence length="143" mass="15803">MQFNISDIIKTLPHSYPFLLVDRVIECDPGKSIKAIKNVTFNEPFFIGHFPGHPIMPGVLIIESLAQASAICVLGKETIENKVVYLRSIENAKFRKLVTPGDTLILQANIQSVCLGVYKFRCIASVSEEKVAEATISAVLQNK</sequence>
<comment type="function">
    <text evidence="1">Involved in unsaturated fatty acids biosynthesis. Catalyzes the dehydration of short chain beta-hydroxyacyl-ACPs and long chain saturated and unsaturated beta-hydroxyacyl-ACPs.</text>
</comment>
<comment type="catalytic activity">
    <reaction evidence="1">
        <text>a (3R)-hydroxyacyl-[ACP] = a (2E)-enoyl-[ACP] + H2O</text>
        <dbReference type="Rhea" id="RHEA:13097"/>
        <dbReference type="Rhea" id="RHEA-COMP:9925"/>
        <dbReference type="Rhea" id="RHEA-COMP:9945"/>
        <dbReference type="ChEBI" id="CHEBI:15377"/>
        <dbReference type="ChEBI" id="CHEBI:78784"/>
        <dbReference type="ChEBI" id="CHEBI:78827"/>
        <dbReference type="EC" id="4.2.1.59"/>
    </reaction>
</comment>
<comment type="subcellular location">
    <subcellularLocation>
        <location evidence="1">Cytoplasm</location>
    </subcellularLocation>
</comment>
<comment type="similarity">
    <text evidence="1">Belongs to the thioester dehydratase family. FabZ subfamily.</text>
</comment>